<organism>
    <name type="scientific">Mus musculus</name>
    <name type="common">Mouse</name>
    <dbReference type="NCBI Taxonomy" id="10090"/>
    <lineage>
        <taxon>Eukaryota</taxon>
        <taxon>Metazoa</taxon>
        <taxon>Chordata</taxon>
        <taxon>Craniata</taxon>
        <taxon>Vertebrata</taxon>
        <taxon>Euteleostomi</taxon>
        <taxon>Mammalia</taxon>
        <taxon>Eutheria</taxon>
        <taxon>Euarchontoglires</taxon>
        <taxon>Glires</taxon>
        <taxon>Rodentia</taxon>
        <taxon>Myomorpha</taxon>
        <taxon>Muroidea</taxon>
        <taxon>Muridae</taxon>
        <taxon>Murinae</taxon>
        <taxon>Mus</taxon>
        <taxon>Mus</taxon>
    </lineage>
</organism>
<proteinExistence type="evidence at transcript level"/>
<comment type="function">
    <text evidence="1">Required for ciliogenesis.</text>
</comment>
<comment type="subcellular location">
    <subcellularLocation>
        <location evidence="1">Vacuole membrane</location>
        <topology evidence="1">Multi-pass membrane protein</topology>
    </subcellularLocation>
    <subcellularLocation>
        <location evidence="1">Cell projection</location>
        <location evidence="1">Cilium</location>
    </subcellularLocation>
    <text evidence="1">Localizes to vesicles en route to the base of cilium.</text>
</comment>
<comment type="alternative products">
    <event type="alternative splicing"/>
    <isoform>
        <id>Q9D6G5-1</id>
        <name>1</name>
        <sequence type="displayed"/>
    </isoform>
    <isoform>
        <id>Q9D6G5-2</id>
        <name>2</name>
        <sequence type="described" ref="VSP_024893 VSP_024894"/>
    </isoform>
</comment>
<comment type="similarity">
    <text evidence="4">Belongs to the TMEM138 family.</text>
</comment>
<keyword id="KW-0025">Alternative splicing</keyword>
<keyword id="KW-0966">Cell projection</keyword>
<keyword id="KW-0969">Cilium</keyword>
<keyword id="KW-0970">Cilium biogenesis/degradation</keyword>
<keyword id="KW-0325">Glycoprotein</keyword>
<keyword id="KW-0472">Membrane</keyword>
<keyword id="KW-1185">Reference proteome</keyword>
<keyword id="KW-0812">Transmembrane</keyword>
<keyword id="KW-1133">Transmembrane helix</keyword>
<keyword id="KW-0926">Vacuole</keyword>
<feature type="chain" id="PRO_0000285701" description="Transmembrane protein 138">
    <location>
        <begin position="1"/>
        <end position="162"/>
    </location>
</feature>
<feature type="transmembrane region" description="Helical" evidence="2">
    <location>
        <begin position="7"/>
        <end position="27"/>
    </location>
</feature>
<feature type="transmembrane region" description="Helical" evidence="2">
    <location>
        <begin position="41"/>
        <end position="61"/>
    </location>
</feature>
<feature type="transmembrane region" description="Helical" evidence="2">
    <location>
        <begin position="80"/>
        <end position="100"/>
    </location>
</feature>
<feature type="transmembrane region" description="Helical" evidence="2">
    <location>
        <begin position="115"/>
        <end position="134"/>
    </location>
</feature>
<feature type="glycosylation site" description="N-linked (GlcNAc...) asparagine" evidence="2">
    <location>
        <position position="6"/>
    </location>
</feature>
<feature type="splice variant" id="VSP_024893" description="In isoform 2." evidence="3">
    <original>N</original>
    <variation>I</variation>
    <location>
        <position position="101"/>
    </location>
</feature>
<feature type="splice variant" id="VSP_024894" description="In isoform 2." evidence="3">
    <location>
        <begin position="102"/>
        <end position="162"/>
    </location>
</feature>
<dbReference type="EMBL" id="AK007197">
    <property type="protein sequence ID" value="BAB24895.1"/>
    <property type="molecule type" value="mRNA"/>
</dbReference>
<dbReference type="EMBL" id="AK013694">
    <property type="protein sequence ID" value="BAB28958.1"/>
    <property type="molecule type" value="mRNA"/>
</dbReference>
<dbReference type="EMBL" id="AK050471">
    <property type="protein sequence ID" value="BAC34274.1"/>
    <property type="molecule type" value="mRNA"/>
</dbReference>
<dbReference type="EMBL" id="BC058237">
    <property type="protein sequence ID" value="AAH58237.1"/>
    <property type="molecule type" value="mRNA"/>
</dbReference>
<dbReference type="EMBL" id="BC107026">
    <property type="protein sequence ID" value="AAI07027.1"/>
    <property type="molecule type" value="mRNA"/>
</dbReference>
<dbReference type="EMBL" id="BC132574">
    <property type="protein sequence ID" value="AAI32575.1"/>
    <property type="molecule type" value="mRNA"/>
</dbReference>
<dbReference type="EMBL" id="BC132578">
    <property type="protein sequence ID" value="AAI32579.1"/>
    <property type="molecule type" value="mRNA"/>
</dbReference>
<dbReference type="CCDS" id="CCDS29581.1">
    <molecule id="Q9D6G5-1"/>
</dbReference>
<dbReference type="RefSeq" id="NP_001289147.1">
    <molecule id="Q9D6G5-2"/>
    <property type="nucleotide sequence ID" value="NM_001302218.1"/>
</dbReference>
<dbReference type="RefSeq" id="NP_082687.1">
    <molecule id="Q9D6G5-1"/>
    <property type="nucleotide sequence ID" value="NM_028411.4"/>
</dbReference>
<dbReference type="RefSeq" id="XP_011245668.1">
    <molecule id="Q9D6G5-1"/>
    <property type="nucleotide sequence ID" value="XM_011247366.3"/>
</dbReference>
<dbReference type="RefSeq" id="XP_011245669.1">
    <molecule id="Q9D6G5-1"/>
    <property type="nucleotide sequence ID" value="XM_011247367.3"/>
</dbReference>
<dbReference type="BioGRID" id="215690">
    <property type="interactions" value="1"/>
</dbReference>
<dbReference type="FunCoup" id="Q9D6G5">
    <property type="interactions" value="638"/>
</dbReference>
<dbReference type="IntAct" id="Q9D6G5">
    <property type="interactions" value="1"/>
</dbReference>
<dbReference type="MINT" id="Q9D6G5"/>
<dbReference type="STRING" id="10090.ENSMUSP00000025568"/>
<dbReference type="GlyCosmos" id="Q9D6G5">
    <property type="glycosylation" value="1 site, No reported glycans"/>
</dbReference>
<dbReference type="GlyGen" id="Q9D6G5">
    <property type="glycosylation" value="1 site"/>
</dbReference>
<dbReference type="PhosphoSitePlus" id="Q9D6G5"/>
<dbReference type="PaxDb" id="10090-ENSMUSP00000025568"/>
<dbReference type="ProteomicsDB" id="259527">
    <molecule id="Q9D6G5-1"/>
</dbReference>
<dbReference type="Antibodypedia" id="28203">
    <property type="antibodies" value="30 antibodies from 14 providers"/>
</dbReference>
<dbReference type="Ensembl" id="ENSMUST00000025568.3">
    <molecule id="Q9D6G5-1"/>
    <property type="protein sequence ID" value="ENSMUSP00000025568.3"/>
    <property type="gene ID" value="ENSMUSG00000024666.7"/>
</dbReference>
<dbReference type="Ensembl" id="ENSMUST00000236099.2">
    <molecule id="Q9D6G5-1"/>
    <property type="protein sequence ID" value="ENSMUSP00000157715.2"/>
    <property type="gene ID" value="ENSMUSG00000024666.7"/>
</dbReference>
<dbReference type="GeneID" id="72982"/>
<dbReference type="KEGG" id="mmu:72982"/>
<dbReference type="UCSC" id="uc008gqd.2">
    <molecule id="Q9D6G5-1"/>
    <property type="organism name" value="mouse"/>
</dbReference>
<dbReference type="UCSC" id="uc008gqf.2">
    <molecule id="Q9D6G5-2"/>
    <property type="organism name" value="mouse"/>
</dbReference>
<dbReference type="AGR" id="MGI:1920232"/>
<dbReference type="CTD" id="51524"/>
<dbReference type="MGI" id="MGI:1920232">
    <property type="gene designation" value="Tmem138"/>
</dbReference>
<dbReference type="VEuPathDB" id="HostDB:ENSMUSG00000024666"/>
<dbReference type="eggNOG" id="ENOG502RWE6">
    <property type="taxonomic scope" value="Eukaryota"/>
</dbReference>
<dbReference type="GeneTree" id="ENSGT00390000018587"/>
<dbReference type="HOGENOM" id="CLU_104681_0_0_1"/>
<dbReference type="InParanoid" id="Q9D6G5"/>
<dbReference type="OMA" id="FYKRTAM"/>
<dbReference type="OrthoDB" id="83597at9989"/>
<dbReference type="PhylomeDB" id="Q9D6G5"/>
<dbReference type="TreeFam" id="TF315159"/>
<dbReference type="BioGRID-ORCS" id="72982">
    <property type="hits" value="4 hits in 78 CRISPR screens"/>
</dbReference>
<dbReference type="ChiTaRS" id="Tmem138">
    <property type="organism name" value="mouse"/>
</dbReference>
<dbReference type="PRO" id="PR:Q9D6G5"/>
<dbReference type="Proteomes" id="UP000000589">
    <property type="component" value="Chromosome 19"/>
</dbReference>
<dbReference type="RNAct" id="Q9D6G5">
    <property type="molecule type" value="protein"/>
</dbReference>
<dbReference type="Bgee" id="ENSMUSG00000024666">
    <property type="expression patterns" value="Expressed in retinal neural layer and 139 other cell types or tissues"/>
</dbReference>
<dbReference type="ExpressionAtlas" id="Q9D6G5">
    <property type="expression patterns" value="baseline and differential"/>
</dbReference>
<dbReference type="GO" id="GO:0005929">
    <property type="term" value="C:cilium"/>
    <property type="evidence" value="ECO:0000250"/>
    <property type="project" value="UniProtKB"/>
</dbReference>
<dbReference type="GO" id="GO:0005774">
    <property type="term" value="C:vacuolar membrane"/>
    <property type="evidence" value="ECO:0007669"/>
    <property type="project" value="UniProtKB-SubCell"/>
</dbReference>
<dbReference type="GO" id="GO:0060271">
    <property type="term" value="P:cilium assembly"/>
    <property type="evidence" value="ECO:0000250"/>
    <property type="project" value="UniProtKB"/>
</dbReference>
<dbReference type="InterPro" id="IPR024133">
    <property type="entry name" value="TM_138"/>
</dbReference>
<dbReference type="PANTHER" id="PTHR13306">
    <property type="entry name" value="TRANSMEMBRANE PROTEIN 138"/>
    <property type="match status" value="1"/>
</dbReference>
<dbReference type="PANTHER" id="PTHR13306:SF6">
    <property type="entry name" value="TRANSMEMBRANE PROTEIN 138"/>
    <property type="match status" value="1"/>
</dbReference>
<dbReference type="Pfam" id="PF14935">
    <property type="entry name" value="TMEM138"/>
    <property type="match status" value="1"/>
</dbReference>
<reference key="1">
    <citation type="journal article" date="2005" name="Science">
        <title>The transcriptional landscape of the mammalian genome.</title>
        <authorList>
            <person name="Carninci P."/>
            <person name="Kasukawa T."/>
            <person name="Katayama S."/>
            <person name="Gough J."/>
            <person name="Frith M.C."/>
            <person name="Maeda N."/>
            <person name="Oyama R."/>
            <person name="Ravasi T."/>
            <person name="Lenhard B."/>
            <person name="Wells C."/>
            <person name="Kodzius R."/>
            <person name="Shimokawa K."/>
            <person name="Bajic V.B."/>
            <person name="Brenner S.E."/>
            <person name="Batalov S."/>
            <person name="Forrest A.R."/>
            <person name="Zavolan M."/>
            <person name="Davis M.J."/>
            <person name="Wilming L.G."/>
            <person name="Aidinis V."/>
            <person name="Allen J.E."/>
            <person name="Ambesi-Impiombato A."/>
            <person name="Apweiler R."/>
            <person name="Aturaliya R.N."/>
            <person name="Bailey T.L."/>
            <person name="Bansal M."/>
            <person name="Baxter L."/>
            <person name="Beisel K.W."/>
            <person name="Bersano T."/>
            <person name="Bono H."/>
            <person name="Chalk A.M."/>
            <person name="Chiu K.P."/>
            <person name="Choudhary V."/>
            <person name="Christoffels A."/>
            <person name="Clutterbuck D.R."/>
            <person name="Crowe M.L."/>
            <person name="Dalla E."/>
            <person name="Dalrymple B.P."/>
            <person name="de Bono B."/>
            <person name="Della Gatta G."/>
            <person name="di Bernardo D."/>
            <person name="Down T."/>
            <person name="Engstrom P."/>
            <person name="Fagiolini M."/>
            <person name="Faulkner G."/>
            <person name="Fletcher C.F."/>
            <person name="Fukushima T."/>
            <person name="Furuno M."/>
            <person name="Futaki S."/>
            <person name="Gariboldi M."/>
            <person name="Georgii-Hemming P."/>
            <person name="Gingeras T.R."/>
            <person name="Gojobori T."/>
            <person name="Green R.E."/>
            <person name="Gustincich S."/>
            <person name="Harbers M."/>
            <person name="Hayashi Y."/>
            <person name="Hensch T.K."/>
            <person name="Hirokawa N."/>
            <person name="Hill D."/>
            <person name="Huminiecki L."/>
            <person name="Iacono M."/>
            <person name="Ikeo K."/>
            <person name="Iwama A."/>
            <person name="Ishikawa T."/>
            <person name="Jakt M."/>
            <person name="Kanapin A."/>
            <person name="Katoh M."/>
            <person name="Kawasawa Y."/>
            <person name="Kelso J."/>
            <person name="Kitamura H."/>
            <person name="Kitano H."/>
            <person name="Kollias G."/>
            <person name="Krishnan S.P."/>
            <person name="Kruger A."/>
            <person name="Kummerfeld S.K."/>
            <person name="Kurochkin I.V."/>
            <person name="Lareau L.F."/>
            <person name="Lazarevic D."/>
            <person name="Lipovich L."/>
            <person name="Liu J."/>
            <person name="Liuni S."/>
            <person name="McWilliam S."/>
            <person name="Madan Babu M."/>
            <person name="Madera M."/>
            <person name="Marchionni L."/>
            <person name="Matsuda H."/>
            <person name="Matsuzawa S."/>
            <person name="Miki H."/>
            <person name="Mignone F."/>
            <person name="Miyake S."/>
            <person name="Morris K."/>
            <person name="Mottagui-Tabar S."/>
            <person name="Mulder N."/>
            <person name="Nakano N."/>
            <person name="Nakauchi H."/>
            <person name="Ng P."/>
            <person name="Nilsson R."/>
            <person name="Nishiguchi S."/>
            <person name="Nishikawa S."/>
            <person name="Nori F."/>
            <person name="Ohara O."/>
            <person name="Okazaki Y."/>
            <person name="Orlando V."/>
            <person name="Pang K.C."/>
            <person name="Pavan W.J."/>
            <person name="Pavesi G."/>
            <person name="Pesole G."/>
            <person name="Petrovsky N."/>
            <person name="Piazza S."/>
            <person name="Reed J."/>
            <person name="Reid J.F."/>
            <person name="Ring B.Z."/>
            <person name="Ringwald M."/>
            <person name="Rost B."/>
            <person name="Ruan Y."/>
            <person name="Salzberg S.L."/>
            <person name="Sandelin A."/>
            <person name="Schneider C."/>
            <person name="Schoenbach C."/>
            <person name="Sekiguchi K."/>
            <person name="Semple C.A."/>
            <person name="Seno S."/>
            <person name="Sessa L."/>
            <person name="Sheng Y."/>
            <person name="Shibata Y."/>
            <person name="Shimada H."/>
            <person name="Shimada K."/>
            <person name="Silva D."/>
            <person name="Sinclair B."/>
            <person name="Sperling S."/>
            <person name="Stupka E."/>
            <person name="Sugiura K."/>
            <person name="Sultana R."/>
            <person name="Takenaka Y."/>
            <person name="Taki K."/>
            <person name="Tammoja K."/>
            <person name="Tan S.L."/>
            <person name="Tang S."/>
            <person name="Taylor M.S."/>
            <person name="Tegner J."/>
            <person name="Teichmann S.A."/>
            <person name="Ueda H.R."/>
            <person name="van Nimwegen E."/>
            <person name="Verardo R."/>
            <person name="Wei C.L."/>
            <person name="Yagi K."/>
            <person name="Yamanishi H."/>
            <person name="Zabarovsky E."/>
            <person name="Zhu S."/>
            <person name="Zimmer A."/>
            <person name="Hide W."/>
            <person name="Bult C."/>
            <person name="Grimmond S.M."/>
            <person name="Teasdale R.D."/>
            <person name="Liu E.T."/>
            <person name="Brusic V."/>
            <person name="Quackenbush J."/>
            <person name="Wahlestedt C."/>
            <person name="Mattick J.S."/>
            <person name="Hume D.A."/>
            <person name="Kai C."/>
            <person name="Sasaki D."/>
            <person name="Tomaru Y."/>
            <person name="Fukuda S."/>
            <person name="Kanamori-Katayama M."/>
            <person name="Suzuki M."/>
            <person name="Aoki J."/>
            <person name="Arakawa T."/>
            <person name="Iida J."/>
            <person name="Imamura K."/>
            <person name="Itoh M."/>
            <person name="Kato T."/>
            <person name="Kawaji H."/>
            <person name="Kawagashira N."/>
            <person name="Kawashima T."/>
            <person name="Kojima M."/>
            <person name="Kondo S."/>
            <person name="Konno H."/>
            <person name="Nakano K."/>
            <person name="Ninomiya N."/>
            <person name="Nishio T."/>
            <person name="Okada M."/>
            <person name="Plessy C."/>
            <person name="Shibata K."/>
            <person name="Shiraki T."/>
            <person name="Suzuki S."/>
            <person name="Tagami M."/>
            <person name="Waki K."/>
            <person name="Watahiki A."/>
            <person name="Okamura-Oho Y."/>
            <person name="Suzuki H."/>
            <person name="Kawai J."/>
            <person name="Hayashizaki Y."/>
        </authorList>
    </citation>
    <scope>NUCLEOTIDE SEQUENCE [LARGE SCALE MRNA] (ISOFORMS 1 AND 2)</scope>
    <source>
        <strain>C57BL/6J</strain>
        <tissue>Hippocampus</tissue>
        <tissue>Pancreas</tissue>
        <tissue>Testis</tissue>
    </source>
</reference>
<reference key="2">
    <citation type="journal article" date="2004" name="Genome Res.">
        <title>The status, quality, and expansion of the NIH full-length cDNA project: the Mammalian Gene Collection (MGC).</title>
        <authorList>
            <consortium name="The MGC Project Team"/>
        </authorList>
    </citation>
    <scope>NUCLEOTIDE SEQUENCE [LARGE SCALE MRNA] (ISOFORM 1)</scope>
    <source>
        <tissue>Olfactory epithelium</tissue>
    </source>
</reference>
<gene>
    <name type="primary">Tmem138</name>
</gene>
<protein>
    <recommendedName>
        <fullName>Transmembrane protein 138</fullName>
    </recommendedName>
</protein>
<accession>Q9D6G5</accession>
<accession>Q9D9A8</accession>
<name>TM138_MOUSE</name>
<evidence type="ECO:0000250" key="1"/>
<evidence type="ECO:0000255" key="2"/>
<evidence type="ECO:0000303" key="3">
    <source>
    </source>
</evidence>
<evidence type="ECO:0000305" key="4"/>
<sequence length="162" mass="19150">MLQTGNYSLVLSLQFLLLSYDLFVNSFSELLRMAPVIQLVLFIIQDIAILFNIIIIFLMFFNTFVFQAGLVNLLFHKFKGTIILTSVYLALSISLHVWVMNVRWKNSSSFSWTNGLQTLFVFQRLAAVLYCYFYKRTAVRLGDPRFYQDSLWLRKEFMQVRR</sequence>